<dbReference type="EC" id="3.4.11.1" evidence="1"/>
<dbReference type="EC" id="3.4.11.10" evidence="1"/>
<dbReference type="EMBL" id="BX548174">
    <property type="protein sequence ID" value="CAE19791.1"/>
    <property type="molecule type" value="Genomic_DNA"/>
</dbReference>
<dbReference type="RefSeq" id="WP_011132966.1">
    <property type="nucleotide sequence ID" value="NC_005072.1"/>
</dbReference>
<dbReference type="SMR" id="Q7V0D4"/>
<dbReference type="STRING" id="59919.PMM1332"/>
<dbReference type="MEROPS" id="M17.A01"/>
<dbReference type="KEGG" id="pmm:PMM1332"/>
<dbReference type="eggNOG" id="COG0260">
    <property type="taxonomic scope" value="Bacteria"/>
</dbReference>
<dbReference type="HOGENOM" id="CLU_013734_5_1_3"/>
<dbReference type="OrthoDB" id="9809354at2"/>
<dbReference type="Proteomes" id="UP000001026">
    <property type="component" value="Chromosome"/>
</dbReference>
<dbReference type="GO" id="GO:0005737">
    <property type="term" value="C:cytoplasm"/>
    <property type="evidence" value="ECO:0007669"/>
    <property type="project" value="UniProtKB-SubCell"/>
</dbReference>
<dbReference type="GO" id="GO:0030145">
    <property type="term" value="F:manganese ion binding"/>
    <property type="evidence" value="ECO:0007669"/>
    <property type="project" value="UniProtKB-UniRule"/>
</dbReference>
<dbReference type="GO" id="GO:0070006">
    <property type="term" value="F:metalloaminopeptidase activity"/>
    <property type="evidence" value="ECO:0007669"/>
    <property type="project" value="InterPro"/>
</dbReference>
<dbReference type="GO" id="GO:0006508">
    <property type="term" value="P:proteolysis"/>
    <property type="evidence" value="ECO:0007669"/>
    <property type="project" value="UniProtKB-KW"/>
</dbReference>
<dbReference type="CDD" id="cd00433">
    <property type="entry name" value="Peptidase_M17"/>
    <property type="match status" value="1"/>
</dbReference>
<dbReference type="Gene3D" id="3.40.220.10">
    <property type="entry name" value="Leucine Aminopeptidase, subunit E, domain 1"/>
    <property type="match status" value="1"/>
</dbReference>
<dbReference type="Gene3D" id="3.40.630.10">
    <property type="entry name" value="Zn peptidases"/>
    <property type="match status" value="1"/>
</dbReference>
<dbReference type="HAMAP" id="MF_00181">
    <property type="entry name" value="Cytosol_peptidase_M17"/>
    <property type="match status" value="1"/>
</dbReference>
<dbReference type="InterPro" id="IPR011356">
    <property type="entry name" value="Leucine_aapep/pepB"/>
</dbReference>
<dbReference type="InterPro" id="IPR043472">
    <property type="entry name" value="Macro_dom-like"/>
</dbReference>
<dbReference type="InterPro" id="IPR000819">
    <property type="entry name" value="Peptidase_M17_C"/>
</dbReference>
<dbReference type="InterPro" id="IPR023042">
    <property type="entry name" value="Peptidase_M17_leu_NH2_pept"/>
</dbReference>
<dbReference type="InterPro" id="IPR008283">
    <property type="entry name" value="Peptidase_M17_N"/>
</dbReference>
<dbReference type="NCBIfam" id="NF002076">
    <property type="entry name" value="PRK00913.2-3"/>
    <property type="match status" value="1"/>
</dbReference>
<dbReference type="PANTHER" id="PTHR11963:SF23">
    <property type="entry name" value="CYTOSOL AMINOPEPTIDASE"/>
    <property type="match status" value="1"/>
</dbReference>
<dbReference type="PANTHER" id="PTHR11963">
    <property type="entry name" value="LEUCINE AMINOPEPTIDASE-RELATED"/>
    <property type="match status" value="1"/>
</dbReference>
<dbReference type="Pfam" id="PF00883">
    <property type="entry name" value="Peptidase_M17"/>
    <property type="match status" value="1"/>
</dbReference>
<dbReference type="Pfam" id="PF02789">
    <property type="entry name" value="Peptidase_M17_N"/>
    <property type="match status" value="1"/>
</dbReference>
<dbReference type="PRINTS" id="PR00481">
    <property type="entry name" value="LAMNOPPTDASE"/>
</dbReference>
<dbReference type="SUPFAM" id="SSF52949">
    <property type="entry name" value="Macro domain-like"/>
    <property type="match status" value="1"/>
</dbReference>
<dbReference type="SUPFAM" id="SSF53187">
    <property type="entry name" value="Zn-dependent exopeptidases"/>
    <property type="match status" value="1"/>
</dbReference>
<dbReference type="PROSITE" id="PS00631">
    <property type="entry name" value="CYTOSOL_AP"/>
    <property type="match status" value="1"/>
</dbReference>
<comment type="function">
    <text evidence="1">Presumably involved in the processing and regular turnover of intracellular proteins. Catalyzes the removal of unsubstituted N-terminal amino acids from various peptides.</text>
</comment>
<comment type="catalytic activity">
    <reaction evidence="1">
        <text>Release of an N-terminal amino acid, Xaa-|-Yaa-, in which Xaa is preferably Leu, but may be other amino acids including Pro although not Arg or Lys, and Yaa may be Pro. Amino acid amides and methyl esters are also readily hydrolyzed, but rates on arylamides are exceedingly low.</text>
        <dbReference type="EC" id="3.4.11.1"/>
    </reaction>
</comment>
<comment type="catalytic activity">
    <reaction evidence="1">
        <text>Release of an N-terminal amino acid, preferentially leucine, but not glutamic or aspartic acids.</text>
        <dbReference type="EC" id="3.4.11.10"/>
    </reaction>
</comment>
<comment type="cofactor">
    <cofactor evidence="1">
        <name>Mn(2+)</name>
        <dbReference type="ChEBI" id="CHEBI:29035"/>
    </cofactor>
    <text evidence="1">Binds 2 manganese ions per subunit.</text>
</comment>
<comment type="subcellular location">
    <subcellularLocation>
        <location evidence="1">Cytoplasm</location>
    </subcellularLocation>
</comment>
<comment type="similarity">
    <text evidence="1">Belongs to the peptidase M17 family.</text>
</comment>
<feature type="chain" id="PRO_0000165781" description="Probable cytosol aminopeptidase">
    <location>
        <begin position="1"/>
        <end position="491"/>
    </location>
</feature>
<feature type="active site" evidence="1">
    <location>
        <position position="269"/>
    </location>
</feature>
<feature type="active site" evidence="1">
    <location>
        <position position="345"/>
    </location>
</feature>
<feature type="binding site" evidence="1">
    <location>
        <position position="257"/>
    </location>
    <ligand>
        <name>Mn(2+)</name>
        <dbReference type="ChEBI" id="CHEBI:29035"/>
        <label>2</label>
    </ligand>
</feature>
<feature type="binding site" evidence="1">
    <location>
        <position position="262"/>
    </location>
    <ligand>
        <name>Mn(2+)</name>
        <dbReference type="ChEBI" id="CHEBI:29035"/>
        <label>1</label>
    </ligand>
</feature>
<feature type="binding site" evidence="1">
    <location>
        <position position="262"/>
    </location>
    <ligand>
        <name>Mn(2+)</name>
        <dbReference type="ChEBI" id="CHEBI:29035"/>
        <label>2</label>
    </ligand>
</feature>
<feature type="binding site" evidence="1">
    <location>
        <position position="281"/>
    </location>
    <ligand>
        <name>Mn(2+)</name>
        <dbReference type="ChEBI" id="CHEBI:29035"/>
        <label>2</label>
    </ligand>
</feature>
<feature type="binding site" evidence="1">
    <location>
        <position position="341"/>
    </location>
    <ligand>
        <name>Mn(2+)</name>
        <dbReference type="ChEBI" id="CHEBI:29035"/>
        <label>1</label>
    </ligand>
</feature>
<feature type="binding site" evidence="1">
    <location>
        <position position="343"/>
    </location>
    <ligand>
        <name>Mn(2+)</name>
        <dbReference type="ChEBI" id="CHEBI:29035"/>
        <label>1</label>
    </ligand>
</feature>
<feature type="binding site" evidence="1">
    <location>
        <position position="343"/>
    </location>
    <ligand>
        <name>Mn(2+)</name>
        <dbReference type="ChEBI" id="CHEBI:29035"/>
        <label>2</label>
    </ligand>
</feature>
<protein>
    <recommendedName>
        <fullName evidence="1">Probable cytosol aminopeptidase</fullName>
        <ecNumber evidence="1">3.4.11.1</ecNumber>
    </recommendedName>
    <alternativeName>
        <fullName evidence="1">Leucine aminopeptidase</fullName>
        <shortName evidence="1">LAP</shortName>
        <ecNumber evidence="1">3.4.11.10</ecNumber>
    </alternativeName>
    <alternativeName>
        <fullName evidence="1">Leucyl aminopeptidase</fullName>
    </alternativeName>
</protein>
<evidence type="ECO:0000255" key="1">
    <source>
        <dbReference type="HAMAP-Rule" id="MF_00181"/>
    </source>
</evidence>
<proteinExistence type="inferred from homology"/>
<accession>Q7V0D4</accession>
<gene>
    <name evidence="1" type="primary">pepA</name>
    <name type="ordered locus">PMM1332</name>
</gene>
<keyword id="KW-0031">Aminopeptidase</keyword>
<keyword id="KW-0963">Cytoplasm</keyword>
<keyword id="KW-0378">Hydrolase</keyword>
<keyword id="KW-0464">Manganese</keyword>
<keyword id="KW-0479">Metal-binding</keyword>
<keyword id="KW-0645">Protease</keyword>
<sequence>MQFSTFQQDLNTWQGSSLIFGIVEEDLKNQLQKINFIIDSKLLLEKINQKKFNGEKGKILNFDFFDQRLQTLKIIGLGESKNINSNDIKNSLADVIRKSSDKEEKISILFPWELINSPEEIQSFGESARLSAYKDNRFNSKRDDKKVLNEIEFLNLNKFKNINFNETEYICEGVELARRLVAAPPNSLTPLEMSIQASKIAKDHGLEIKILEKNECEDLGMGAYLAVAKGSDLEPKFIHLTLKSTSPVKEKIALVGKGLTFDSGGYNLKVGASQIEMMKYDMGGSAAVLGAAKALGAIKPDGLEIHFIVAACENMINGSAVHPGDVIKASNGKTIEINNTDAEGRLTLADALTYASNLKPDSIIDLATLTGAIVVALGNDVAGFWTNNNMMASDLKTASSQAGEELWQMPLQKSYKDGLKSHIADMKNTGPRAGGSITAALFLEEFFDKNIKWAHIDIAGTCWTDKNRGIHPSGATGYGVKTLVQWIKNKR</sequence>
<name>AMPA_PROMP</name>
<reference key="1">
    <citation type="journal article" date="2003" name="Nature">
        <title>Genome divergence in two Prochlorococcus ecotypes reflects oceanic niche differentiation.</title>
        <authorList>
            <person name="Rocap G."/>
            <person name="Larimer F.W."/>
            <person name="Lamerdin J.E."/>
            <person name="Malfatti S."/>
            <person name="Chain P."/>
            <person name="Ahlgren N.A."/>
            <person name="Arellano A."/>
            <person name="Coleman M."/>
            <person name="Hauser L."/>
            <person name="Hess W.R."/>
            <person name="Johnson Z.I."/>
            <person name="Land M.L."/>
            <person name="Lindell D."/>
            <person name="Post A.F."/>
            <person name="Regala W."/>
            <person name="Shah M."/>
            <person name="Shaw S.L."/>
            <person name="Steglich C."/>
            <person name="Sullivan M.B."/>
            <person name="Ting C.S."/>
            <person name="Tolonen A."/>
            <person name="Webb E.A."/>
            <person name="Zinser E.R."/>
            <person name="Chisholm S.W."/>
        </authorList>
    </citation>
    <scope>NUCLEOTIDE SEQUENCE [LARGE SCALE GENOMIC DNA]</scope>
    <source>
        <strain>CCMP1986 / NIES-2087 / MED4</strain>
    </source>
</reference>
<organism>
    <name type="scientific">Prochlorococcus marinus subsp. pastoris (strain CCMP1986 / NIES-2087 / MED4)</name>
    <dbReference type="NCBI Taxonomy" id="59919"/>
    <lineage>
        <taxon>Bacteria</taxon>
        <taxon>Bacillati</taxon>
        <taxon>Cyanobacteriota</taxon>
        <taxon>Cyanophyceae</taxon>
        <taxon>Synechococcales</taxon>
        <taxon>Prochlorococcaceae</taxon>
        <taxon>Prochlorococcus</taxon>
    </lineage>
</organism>